<reference key="1">
    <citation type="journal article" date="2013" name="ACS Chem. Biol.">
        <title>Two related pyrrolidinedione synthetase loci in Fusarium heterosporum ATCC 74349 produce divergent metabolites.</title>
        <authorList>
            <person name="Kakule T.B."/>
            <person name="Sardar D."/>
            <person name="Lin Z."/>
            <person name="Schmidt E.W."/>
        </authorList>
    </citation>
    <scope>NUCLEOTIDE SEQUENCE [GENOMIC DNA]</scope>
    <scope>FUNCTION</scope>
    <scope>DISRUPTION PHENOTYPE</scope>
    <scope>PATHWAY</scope>
    <source>
        <strain>ATCC 74349 / MF6069</strain>
    </source>
</reference>
<reference key="2">
    <citation type="journal article" date="2008" name="J. Am. Chem. Soc.">
        <title>Thioesterase-like role for fungal PKS-NRPS hybrid reductive domains.</title>
        <authorList>
            <person name="Sims J.W."/>
            <person name="Schmidt E.W."/>
        </authorList>
    </citation>
    <scope>FUNCTION</scope>
</reference>
<name>EQXD_FUSHE</name>
<organism>
    <name type="scientific">Fusarium heterosporum</name>
    <dbReference type="NCBI Taxonomy" id="42747"/>
    <lineage>
        <taxon>Eukaryota</taxon>
        <taxon>Fungi</taxon>
        <taxon>Dikarya</taxon>
        <taxon>Ascomycota</taxon>
        <taxon>Pezizomycotina</taxon>
        <taxon>Sordariomycetes</taxon>
        <taxon>Hypocreomycetidae</taxon>
        <taxon>Hypocreales</taxon>
        <taxon>Nectriaceae</taxon>
        <taxon>Fusarium</taxon>
        <taxon>Fusarium heterosporum species complex</taxon>
    </lineage>
</organism>
<comment type="function">
    <text evidence="1 4 5">Methyltransferase; part of the gene cluster that mediates the biosynthesis of equisetin, a trans-fused decalin-containing tetramic acid with antimicrobial activity (PubMed:23614392). The PKS module of eqxS together with the enoylreductase eqxC catalyze the formation of the polyketide unit which is then conjugated to L-serine by the condensation domain of the eqxS NRPS module (PubMed:23614392). Activity of the Dieckmann cyclase domain (RED) results in release of the Dieckmann product intermediate (PubMed:18652469, PubMed:23614392). Diels-Alderase eqx3 is involved in endo-selective Diels-Alder cycloaddition to form the decalin ring, leading to the production of N-desmethylequisetin also called trichosetin (By similarity). Subsequent N-methylation is carried out by eqxD to give equisetin (PubMed:23614392).</text>
</comment>
<comment type="catalytic activity">
    <reaction evidence="8">
        <text>trichosetin + S-adenosyl-L-methionine = equisetin + S-adenosyl-L-homocysteine + H(+)</text>
        <dbReference type="Rhea" id="RHEA:57648"/>
        <dbReference type="ChEBI" id="CHEBI:15378"/>
        <dbReference type="ChEBI" id="CHEBI:57856"/>
        <dbReference type="ChEBI" id="CHEBI:59789"/>
        <dbReference type="ChEBI" id="CHEBI:142060"/>
        <dbReference type="ChEBI" id="CHEBI:142061"/>
    </reaction>
    <physiologicalReaction direction="left-to-right" evidence="8">
        <dbReference type="Rhea" id="RHEA:57649"/>
    </physiologicalReaction>
</comment>
<comment type="pathway">
    <text evidence="5">Mycotoxin biosynthesis.</text>
</comment>
<comment type="disruption phenotype">
    <text evidence="5">Abolishes the production of equisetin and accumulates the intermediate trichosetin (PubMed:23614392).</text>
</comment>
<comment type="similarity">
    <text evidence="7">Belongs to the class I-like SAM-binding methyltransferase superfamily. Cation-independent O-methyltransferase family.</text>
</comment>
<proteinExistence type="inferred from homology"/>
<evidence type="ECO:0000250" key="1">
    <source>
        <dbReference type="UniProtKB" id="A0A0E4AZP0"/>
    </source>
</evidence>
<evidence type="ECO:0000250" key="2">
    <source>
        <dbReference type="UniProtKB" id="O04385"/>
    </source>
</evidence>
<evidence type="ECO:0000255" key="3">
    <source>
        <dbReference type="PROSITE-ProRule" id="PRU01020"/>
    </source>
</evidence>
<evidence type="ECO:0000269" key="4">
    <source>
    </source>
</evidence>
<evidence type="ECO:0000269" key="5">
    <source>
    </source>
</evidence>
<evidence type="ECO:0000303" key="6">
    <source>
    </source>
</evidence>
<evidence type="ECO:0000305" key="7"/>
<evidence type="ECO:0000305" key="8">
    <source>
    </source>
</evidence>
<accession>S4W780</accession>
<gene>
    <name evidence="6" type="primary">eqxD</name>
</gene>
<feature type="chain" id="PRO_0000441300" description="Methyltransferase eqxD">
    <location>
        <begin position="1"/>
        <end position="359"/>
    </location>
</feature>
<feature type="binding site" evidence="2">
    <location>
        <begin position="198"/>
        <end position="199"/>
    </location>
    <ligand>
        <name>S-adenosyl-L-methionine</name>
        <dbReference type="ChEBI" id="CHEBI:59789"/>
    </ligand>
</feature>
<feature type="binding site" evidence="3">
    <location>
        <position position="224"/>
    </location>
    <ligand>
        <name>S-adenosyl-L-methionine</name>
        <dbReference type="ChEBI" id="CHEBI:59789"/>
    </ligand>
</feature>
<feature type="binding site" evidence="2">
    <location>
        <begin position="248"/>
        <end position="249"/>
    </location>
    <ligand>
        <name>S-adenosyl-L-methionine</name>
        <dbReference type="ChEBI" id="CHEBI:59789"/>
    </ligand>
</feature>
<feature type="binding site" evidence="2">
    <location>
        <position position="264"/>
    </location>
    <ligand>
        <name>S-adenosyl-L-methionine</name>
        <dbReference type="ChEBI" id="CHEBI:59789"/>
    </ligand>
</feature>
<feature type="binding site" evidence="3">
    <location>
        <position position="265"/>
    </location>
    <ligand>
        <name>S-adenosyl-L-methionine</name>
        <dbReference type="ChEBI" id="CHEBI:59789"/>
    </ligand>
</feature>
<keyword id="KW-0489">Methyltransferase</keyword>
<keyword id="KW-0949">S-adenosyl-L-methionine</keyword>
<keyword id="KW-0808">Transferase</keyword>
<protein>
    <recommendedName>
        <fullName evidence="6">Methyltransferase eqxD</fullName>
        <ecNumber evidence="8">2.1.1.-</ecNumber>
    </recommendedName>
    <alternativeName>
        <fullName evidence="6">Equisetin biosynthesis protein D</fullName>
    </alternativeName>
</protein>
<dbReference type="EC" id="2.1.1.-" evidence="8"/>
<dbReference type="EMBL" id="KC439347">
    <property type="protein sequence ID" value="AGO86665.1"/>
    <property type="molecule type" value="Genomic_DNA"/>
</dbReference>
<dbReference type="SMR" id="S4W780"/>
<dbReference type="BioCyc" id="MetaCyc:MONOMER-19333"/>
<dbReference type="GO" id="GO:0008171">
    <property type="term" value="F:O-methyltransferase activity"/>
    <property type="evidence" value="ECO:0007669"/>
    <property type="project" value="InterPro"/>
</dbReference>
<dbReference type="GO" id="GO:0032259">
    <property type="term" value="P:methylation"/>
    <property type="evidence" value="ECO:0007669"/>
    <property type="project" value="UniProtKB-KW"/>
</dbReference>
<dbReference type="GO" id="GO:0044550">
    <property type="term" value="P:secondary metabolite biosynthetic process"/>
    <property type="evidence" value="ECO:0007669"/>
    <property type="project" value="UniProtKB-ARBA"/>
</dbReference>
<dbReference type="Gene3D" id="3.40.50.150">
    <property type="entry name" value="Vaccinia Virus protein VP39"/>
    <property type="match status" value="1"/>
</dbReference>
<dbReference type="Gene3D" id="1.10.10.10">
    <property type="entry name" value="Winged helix-like DNA-binding domain superfamily/Winged helix DNA-binding domain"/>
    <property type="match status" value="1"/>
</dbReference>
<dbReference type="InterPro" id="IPR016461">
    <property type="entry name" value="COMT-like"/>
</dbReference>
<dbReference type="InterPro" id="IPR001077">
    <property type="entry name" value="O_MeTrfase_dom"/>
</dbReference>
<dbReference type="InterPro" id="IPR029063">
    <property type="entry name" value="SAM-dependent_MTases_sf"/>
</dbReference>
<dbReference type="InterPro" id="IPR036388">
    <property type="entry name" value="WH-like_DNA-bd_sf"/>
</dbReference>
<dbReference type="InterPro" id="IPR036390">
    <property type="entry name" value="WH_DNA-bd_sf"/>
</dbReference>
<dbReference type="PANTHER" id="PTHR43712:SF11">
    <property type="entry name" value="O-METHYLTRANSFERASE (AFU_ORTHOLOGUE AFUA_2G17820)-RELATED"/>
    <property type="match status" value="1"/>
</dbReference>
<dbReference type="PANTHER" id="PTHR43712">
    <property type="entry name" value="PUTATIVE (AFU_ORTHOLOGUE AFUA_4G14580)-RELATED"/>
    <property type="match status" value="1"/>
</dbReference>
<dbReference type="Pfam" id="PF00891">
    <property type="entry name" value="Methyltransf_2"/>
    <property type="match status" value="1"/>
</dbReference>
<dbReference type="PIRSF" id="PIRSF005739">
    <property type="entry name" value="O-mtase"/>
    <property type="match status" value="1"/>
</dbReference>
<dbReference type="SUPFAM" id="SSF53335">
    <property type="entry name" value="S-adenosyl-L-methionine-dependent methyltransferases"/>
    <property type="match status" value="1"/>
</dbReference>
<dbReference type="SUPFAM" id="SSF46785">
    <property type="entry name" value="Winged helix' DNA-binding domain"/>
    <property type="match status" value="1"/>
</dbReference>
<dbReference type="PROSITE" id="PS51683">
    <property type="entry name" value="SAM_OMT_II"/>
    <property type="match status" value="1"/>
</dbReference>
<sequence>MSSILSRYPEAETPVHGYFYSMVELAVVRVFVQHEIFDAIADDGTSIEELATKTGMEMNLLERLSNFLIASKVLSSPKPGFIGLPAETKMFQQRRAKLFYSHIFDAFMGSAVKWPQYLQTNGLAEPQKSNRSPFGLGAGYPDKSFYDVLDMMPERAQAFNSTMAIGLGDMPITGIYDFSWVTAHAGTDPKRTLIVDVGGGKGQAIKAIIEETPSIPASACVLQDLPNVIKDTPEEDGILRKVQKVGSSFFDKQSTRGALVYYIRRVLNDWPDDECVTILKNIREACASDSRLLISENLLPDEPSVSLAAADLWMMNFAGKRRNVRMFNDLASRSGFEISSIAKDKMSNSAVIEMLPVQS</sequence>